<proteinExistence type="inferred from homology"/>
<keyword id="KW-0285">Flavoprotein</keyword>
<keyword id="KW-0288">FMN</keyword>
<keyword id="KW-0560">Oxidoreductase</keyword>
<keyword id="KW-0664">Pyridoxine biosynthesis</keyword>
<keyword id="KW-1185">Reference proteome</keyword>
<gene>
    <name evidence="1" type="primary">pdxH</name>
    <name type="ordered locus">CKO_01650</name>
</gene>
<dbReference type="EC" id="1.4.3.5" evidence="1"/>
<dbReference type="EMBL" id="CP000822">
    <property type="protein sequence ID" value="ABV12782.1"/>
    <property type="molecule type" value="Genomic_DNA"/>
</dbReference>
<dbReference type="RefSeq" id="WP_012132522.1">
    <property type="nucleotide sequence ID" value="NC_009792.1"/>
</dbReference>
<dbReference type="SMR" id="A8AH19"/>
<dbReference type="STRING" id="290338.CKO_01650"/>
<dbReference type="GeneID" id="45135692"/>
<dbReference type="KEGG" id="cko:CKO_01650"/>
<dbReference type="HOGENOM" id="CLU_032263_2_2_6"/>
<dbReference type="OrthoDB" id="9780392at2"/>
<dbReference type="UniPathway" id="UPA01068">
    <property type="reaction ID" value="UER00304"/>
</dbReference>
<dbReference type="UniPathway" id="UPA01068">
    <property type="reaction ID" value="UER00305"/>
</dbReference>
<dbReference type="Proteomes" id="UP000008148">
    <property type="component" value="Chromosome"/>
</dbReference>
<dbReference type="GO" id="GO:0010181">
    <property type="term" value="F:FMN binding"/>
    <property type="evidence" value="ECO:0007669"/>
    <property type="project" value="UniProtKB-UniRule"/>
</dbReference>
<dbReference type="GO" id="GO:0004733">
    <property type="term" value="F:pyridoxamine phosphate oxidase activity"/>
    <property type="evidence" value="ECO:0007669"/>
    <property type="project" value="UniProtKB-UniRule"/>
</dbReference>
<dbReference type="GO" id="GO:0008615">
    <property type="term" value="P:pyridoxine biosynthetic process"/>
    <property type="evidence" value="ECO:0007669"/>
    <property type="project" value="UniProtKB-KW"/>
</dbReference>
<dbReference type="FunFam" id="2.30.110.10:FF:000001">
    <property type="entry name" value="Pyridoxine/pyridoxamine 5'-phosphate oxidase"/>
    <property type="match status" value="1"/>
</dbReference>
<dbReference type="Gene3D" id="2.30.110.10">
    <property type="entry name" value="Electron Transport, Fmn-binding Protein, Chain A"/>
    <property type="match status" value="1"/>
</dbReference>
<dbReference type="HAMAP" id="MF_01629">
    <property type="entry name" value="PdxH"/>
    <property type="match status" value="1"/>
</dbReference>
<dbReference type="InterPro" id="IPR000659">
    <property type="entry name" value="Pyridox_Oxase"/>
</dbReference>
<dbReference type="InterPro" id="IPR019740">
    <property type="entry name" value="Pyridox_Oxase_CS"/>
</dbReference>
<dbReference type="InterPro" id="IPR011576">
    <property type="entry name" value="Pyridox_Oxase_N"/>
</dbReference>
<dbReference type="InterPro" id="IPR019576">
    <property type="entry name" value="Pyridoxamine_oxidase_dimer_C"/>
</dbReference>
<dbReference type="InterPro" id="IPR012349">
    <property type="entry name" value="Split_barrel_FMN-bd"/>
</dbReference>
<dbReference type="NCBIfam" id="TIGR00558">
    <property type="entry name" value="pdxH"/>
    <property type="match status" value="1"/>
</dbReference>
<dbReference type="NCBIfam" id="NF004231">
    <property type="entry name" value="PRK05679.1"/>
    <property type="match status" value="1"/>
</dbReference>
<dbReference type="PANTHER" id="PTHR10851:SF0">
    <property type="entry name" value="PYRIDOXINE-5'-PHOSPHATE OXIDASE"/>
    <property type="match status" value="1"/>
</dbReference>
<dbReference type="PANTHER" id="PTHR10851">
    <property type="entry name" value="PYRIDOXINE-5-PHOSPHATE OXIDASE"/>
    <property type="match status" value="1"/>
</dbReference>
<dbReference type="Pfam" id="PF10590">
    <property type="entry name" value="PNP_phzG_C"/>
    <property type="match status" value="1"/>
</dbReference>
<dbReference type="Pfam" id="PF01243">
    <property type="entry name" value="PNPOx_N"/>
    <property type="match status" value="1"/>
</dbReference>
<dbReference type="PIRSF" id="PIRSF000190">
    <property type="entry name" value="Pyd_amn-ph_oxd"/>
    <property type="match status" value="1"/>
</dbReference>
<dbReference type="SUPFAM" id="SSF50475">
    <property type="entry name" value="FMN-binding split barrel"/>
    <property type="match status" value="1"/>
</dbReference>
<dbReference type="PROSITE" id="PS01064">
    <property type="entry name" value="PYRIDOX_OXIDASE"/>
    <property type="match status" value="1"/>
</dbReference>
<accession>A8AH19</accession>
<comment type="function">
    <text evidence="1">Catalyzes the oxidation of either pyridoxine 5'-phosphate (PNP) or pyridoxamine 5'-phosphate (PMP) into pyridoxal 5'-phosphate (PLP).</text>
</comment>
<comment type="catalytic activity">
    <reaction evidence="1">
        <text>pyridoxamine 5'-phosphate + O2 + H2O = pyridoxal 5'-phosphate + H2O2 + NH4(+)</text>
        <dbReference type="Rhea" id="RHEA:15817"/>
        <dbReference type="ChEBI" id="CHEBI:15377"/>
        <dbReference type="ChEBI" id="CHEBI:15379"/>
        <dbReference type="ChEBI" id="CHEBI:16240"/>
        <dbReference type="ChEBI" id="CHEBI:28938"/>
        <dbReference type="ChEBI" id="CHEBI:58451"/>
        <dbReference type="ChEBI" id="CHEBI:597326"/>
        <dbReference type="EC" id="1.4.3.5"/>
    </reaction>
</comment>
<comment type="catalytic activity">
    <reaction evidence="1">
        <text>pyridoxine 5'-phosphate + O2 = pyridoxal 5'-phosphate + H2O2</text>
        <dbReference type="Rhea" id="RHEA:15149"/>
        <dbReference type="ChEBI" id="CHEBI:15379"/>
        <dbReference type="ChEBI" id="CHEBI:16240"/>
        <dbReference type="ChEBI" id="CHEBI:58589"/>
        <dbReference type="ChEBI" id="CHEBI:597326"/>
        <dbReference type="EC" id="1.4.3.5"/>
    </reaction>
</comment>
<comment type="cofactor">
    <cofactor evidence="1">
        <name>FMN</name>
        <dbReference type="ChEBI" id="CHEBI:58210"/>
    </cofactor>
    <text evidence="1">Binds 1 FMN per subunit.</text>
</comment>
<comment type="pathway">
    <text evidence="1">Cofactor metabolism; pyridoxal 5'-phosphate salvage; pyridoxal 5'-phosphate from pyridoxamine 5'-phosphate: step 1/1.</text>
</comment>
<comment type="pathway">
    <text evidence="1">Cofactor metabolism; pyridoxal 5'-phosphate salvage; pyridoxal 5'-phosphate from pyridoxine 5'-phosphate: step 1/1.</text>
</comment>
<comment type="subunit">
    <text evidence="1">Homodimer.</text>
</comment>
<comment type="similarity">
    <text evidence="1">Belongs to the pyridoxamine 5'-phosphate oxidase family.</text>
</comment>
<feature type="chain" id="PRO_1000069690" description="Pyridoxine/pyridoxamine 5'-phosphate oxidase">
    <location>
        <begin position="1"/>
        <end position="218"/>
    </location>
</feature>
<feature type="binding site" evidence="1">
    <location>
        <begin position="14"/>
        <end position="17"/>
    </location>
    <ligand>
        <name>substrate</name>
    </ligand>
</feature>
<feature type="binding site" evidence="1">
    <location>
        <begin position="67"/>
        <end position="72"/>
    </location>
    <ligand>
        <name>FMN</name>
        <dbReference type="ChEBI" id="CHEBI:58210"/>
    </ligand>
</feature>
<feature type="binding site" evidence="1">
    <location>
        <position position="72"/>
    </location>
    <ligand>
        <name>substrate</name>
    </ligand>
</feature>
<feature type="binding site" evidence="1">
    <location>
        <begin position="82"/>
        <end position="83"/>
    </location>
    <ligand>
        <name>FMN</name>
        <dbReference type="ChEBI" id="CHEBI:58210"/>
    </ligand>
</feature>
<feature type="binding site" evidence="1">
    <location>
        <position position="88"/>
    </location>
    <ligand>
        <name>FMN</name>
        <dbReference type="ChEBI" id="CHEBI:58210"/>
    </ligand>
</feature>
<feature type="binding site" evidence="1">
    <location>
        <position position="89"/>
    </location>
    <ligand>
        <name>FMN</name>
        <dbReference type="ChEBI" id="CHEBI:58210"/>
    </ligand>
</feature>
<feature type="binding site" evidence="1">
    <location>
        <position position="111"/>
    </location>
    <ligand>
        <name>FMN</name>
        <dbReference type="ChEBI" id="CHEBI:58210"/>
    </ligand>
</feature>
<feature type="binding site" evidence="1">
    <location>
        <position position="129"/>
    </location>
    <ligand>
        <name>substrate</name>
    </ligand>
</feature>
<feature type="binding site" evidence="1">
    <location>
        <position position="133"/>
    </location>
    <ligand>
        <name>substrate</name>
    </ligand>
</feature>
<feature type="binding site" evidence="1">
    <location>
        <position position="137"/>
    </location>
    <ligand>
        <name>substrate</name>
    </ligand>
</feature>
<feature type="binding site" evidence="1">
    <location>
        <begin position="146"/>
        <end position="147"/>
    </location>
    <ligand>
        <name>FMN</name>
        <dbReference type="ChEBI" id="CHEBI:58210"/>
    </ligand>
</feature>
<feature type="binding site" evidence="1">
    <location>
        <position position="191"/>
    </location>
    <ligand>
        <name>FMN</name>
        <dbReference type="ChEBI" id="CHEBI:58210"/>
    </ligand>
</feature>
<feature type="binding site" evidence="1">
    <location>
        <begin position="197"/>
        <end position="199"/>
    </location>
    <ligand>
        <name>substrate</name>
    </ligand>
</feature>
<feature type="binding site" evidence="1">
    <location>
        <position position="201"/>
    </location>
    <ligand>
        <name>FMN</name>
        <dbReference type="ChEBI" id="CHEBI:58210"/>
    </ligand>
</feature>
<organism>
    <name type="scientific">Citrobacter koseri (strain ATCC BAA-895 / CDC 4225-83 / SGSC4696)</name>
    <dbReference type="NCBI Taxonomy" id="290338"/>
    <lineage>
        <taxon>Bacteria</taxon>
        <taxon>Pseudomonadati</taxon>
        <taxon>Pseudomonadota</taxon>
        <taxon>Gammaproteobacteria</taxon>
        <taxon>Enterobacterales</taxon>
        <taxon>Enterobacteriaceae</taxon>
        <taxon>Citrobacter</taxon>
    </lineage>
</organism>
<reference key="1">
    <citation type="submission" date="2007-08" db="EMBL/GenBank/DDBJ databases">
        <authorList>
            <consortium name="The Citrobacter koseri Genome Sequencing Project"/>
            <person name="McClelland M."/>
            <person name="Sanderson E.K."/>
            <person name="Porwollik S."/>
            <person name="Spieth J."/>
            <person name="Clifton W.S."/>
            <person name="Latreille P."/>
            <person name="Courtney L."/>
            <person name="Wang C."/>
            <person name="Pepin K."/>
            <person name="Bhonagiri V."/>
            <person name="Nash W."/>
            <person name="Johnson M."/>
            <person name="Thiruvilangam P."/>
            <person name="Wilson R."/>
        </authorList>
    </citation>
    <scope>NUCLEOTIDE SEQUENCE [LARGE SCALE GENOMIC DNA]</scope>
    <source>
        <strain>ATCC BAA-895 / CDC 4225-83 / SGSC4696</strain>
    </source>
</reference>
<protein>
    <recommendedName>
        <fullName evidence="1">Pyridoxine/pyridoxamine 5'-phosphate oxidase</fullName>
        <ecNumber evidence="1">1.4.3.5</ecNumber>
    </recommendedName>
    <alternativeName>
        <fullName evidence="1">PNP/PMP oxidase</fullName>
        <shortName evidence="1">PNPOx</shortName>
    </alternativeName>
    <alternativeName>
        <fullName evidence="1">Pyridoxal 5'-phosphate synthase</fullName>
    </alternativeName>
</protein>
<sequence>MSDNDELQQIAHLRREYTRGGLRRNDLPAEPLTLFERWLGQACDARLADPTAMVVATVDENGQPYQRIVLLKHYDEKGMVFYTNLGSRKAHHLENNPRISLLFPWHMLERQVMVTGKAERLSTLEVVKYFHSRPRDSQIGAWVSKQSSRISARGILESKFLELKQKFQQGEVPLPSFWGGFRVNIEQMEFWQGGEHRLHDRFLYQRENNAWKIDRLAP</sequence>
<evidence type="ECO:0000255" key="1">
    <source>
        <dbReference type="HAMAP-Rule" id="MF_01629"/>
    </source>
</evidence>
<name>PDXH_CITK8</name>